<geneLocation type="mitochondrion"/>
<accession>P69221</accession>
<accession>P16365</accession>
<protein>
    <recommendedName>
        <fullName>Cytochrome b</fullName>
    </recommendedName>
    <alternativeName>
        <fullName>Complex III subunit 3</fullName>
    </alternativeName>
    <alternativeName>
        <fullName>Complex III subunit III</fullName>
    </alternativeName>
    <alternativeName>
        <fullName>Cytochrome b-c1 complex subunit 3</fullName>
    </alternativeName>
    <alternativeName>
        <fullName>Ubiquinol-cytochrome-c reductase complex cytochrome b subunit</fullName>
    </alternativeName>
</protein>
<comment type="function">
    <text evidence="2">Component of the ubiquinol-cytochrome c reductase complex (complex III or cytochrome b-c1 complex) that is part of the mitochondrial respiratory chain. The b-c1 complex mediates electron transfer from ubiquinol to cytochrome c. Contributes to the generation of a proton gradient across the mitochondrial membrane that is then used for ATP synthesis.</text>
</comment>
<comment type="cofactor">
    <cofactor evidence="2">
        <name>heme b</name>
        <dbReference type="ChEBI" id="CHEBI:60344"/>
    </cofactor>
    <text evidence="2">Binds 2 heme b groups non-covalently.</text>
</comment>
<comment type="subunit">
    <text evidence="2">The cytochrome bc1 complex contains 3 respiratory subunits (MT-CYB, CYC1 and UQCRFS1), 2 core proteins (UQCRC1 and UQCRC2) and probably 6 low-molecular weight proteins.</text>
</comment>
<comment type="subcellular location">
    <subcellularLocation>
        <location evidence="2">Mitochondrion inner membrane</location>
        <topology evidence="2">Multi-pass membrane protein</topology>
    </subcellularLocation>
</comment>
<comment type="miscellaneous">
    <text evidence="1">Heme 1 (or BL or b562) is low-potential and absorbs at about 562 nm, and heme 2 (or BH or b566) is high-potential and absorbs at about 566 nm.</text>
</comment>
<comment type="similarity">
    <text evidence="3">Belongs to the cytochrome b family.</text>
</comment>
<comment type="caution">
    <text evidence="2">The full-length protein contains only eight transmembrane helices, not nine as predicted by bioinformatics tools.</text>
</comment>
<name>CYB_AMPLA</name>
<feature type="chain" id="PRO_0000060790" description="Cytochrome b">
    <location>
        <begin position="1" status="less than"/>
        <end position="79" status="greater than"/>
    </location>
</feature>
<feature type="transmembrane region" description="Helical" evidence="2">
    <location>
        <begin position="1" status="less than"/>
        <end position="7"/>
    </location>
</feature>
<feature type="transmembrane region" description="Helical" evidence="2">
    <location>
        <begin position="31"/>
        <end position="52"/>
    </location>
</feature>
<feature type="transmembrane region" description="Helical" evidence="2">
    <location>
        <begin position="67"/>
        <end position="79" status="greater than"/>
    </location>
</feature>
<feature type="binding site" description="axial binding residue" evidence="2">
    <location>
        <position position="37"/>
    </location>
    <ligand>
        <name>heme b</name>
        <dbReference type="ChEBI" id="CHEBI:60344"/>
        <label>b562</label>
    </ligand>
    <ligandPart>
        <name>Fe</name>
        <dbReference type="ChEBI" id="CHEBI:18248"/>
    </ligandPart>
</feature>
<feature type="binding site" description="axial binding residue" evidence="2">
    <location>
        <position position="51"/>
    </location>
    <ligand>
        <name>heme b</name>
        <dbReference type="ChEBI" id="CHEBI:60344"/>
        <label>b566</label>
    </ligand>
    <ligandPart>
        <name>Fe</name>
        <dbReference type="ChEBI" id="CHEBI:18248"/>
    </ligandPart>
</feature>
<feature type="non-terminal residue">
    <location>
        <position position="1"/>
    </location>
</feature>
<feature type="non-terminal residue">
    <location>
        <position position="79"/>
    </location>
</feature>
<evidence type="ECO:0000250" key="1"/>
<evidence type="ECO:0000250" key="2">
    <source>
        <dbReference type="UniProtKB" id="P00157"/>
    </source>
</evidence>
<evidence type="ECO:0000255" key="3">
    <source>
        <dbReference type="PROSITE-ProRule" id="PRU00968"/>
    </source>
</evidence>
<gene>
    <name type="primary">mt-cyb</name>
    <name type="synonym">cob</name>
    <name type="synonym">cytb</name>
    <name type="synonym">mtcyb</name>
</gene>
<proteinExistence type="inferred from homology"/>
<keyword id="KW-0249">Electron transport</keyword>
<keyword id="KW-0349">Heme</keyword>
<keyword id="KW-0408">Iron</keyword>
<keyword id="KW-0472">Membrane</keyword>
<keyword id="KW-0479">Metal-binding</keyword>
<keyword id="KW-0496">Mitochondrion</keyword>
<keyword id="KW-0999">Mitochondrion inner membrane</keyword>
<keyword id="KW-0679">Respiratory chain</keyword>
<keyword id="KW-0812">Transmembrane</keyword>
<keyword id="KW-1133">Transmembrane helix</keyword>
<keyword id="KW-0813">Transport</keyword>
<keyword id="KW-0830">Ubiquinone</keyword>
<sequence length="79" mass="9048">TALFLAMHYTSDIATAFSSVAHICRDVNYGWLIRNMHANGASFFFICIYLHIGRGLYYGSYLYKETWNVGVVLLLLTMM</sequence>
<dbReference type="EMBL" id="M25692">
    <property type="protein sequence ID" value="AAA31686.1"/>
    <property type="molecule type" value="Genomic_DNA"/>
</dbReference>
<dbReference type="PIR" id="C33286">
    <property type="entry name" value="C33286"/>
</dbReference>
<dbReference type="SMR" id="P69221"/>
<dbReference type="GO" id="GO:0005743">
    <property type="term" value="C:mitochondrial inner membrane"/>
    <property type="evidence" value="ECO:0007669"/>
    <property type="project" value="UniProtKB-SubCell"/>
</dbReference>
<dbReference type="GO" id="GO:0046872">
    <property type="term" value="F:metal ion binding"/>
    <property type="evidence" value="ECO:0007669"/>
    <property type="project" value="UniProtKB-KW"/>
</dbReference>
<dbReference type="GO" id="GO:0008121">
    <property type="term" value="F:ubiquinol-cytochrome-c reductase activity"/>
    <property type="evidence" value="ECO:0007669"/>
    <property type="project" value="TreeGrafter"/>
</dbReference>
<dbReference type="GO" id="GO:0006122">
    <property type="term" value="P:mitochondrial electron transport, ubiquinol to cytochrome c"/>
    <property type="evidence" value="ECO:0007669"/>
    <property type="project" value="TreeGrafter"/>
</dbReference>
<dbReference type="Gene3D" id="1.20.810.10">
    <property type="entry name" value="Cytochrome Bc1 Complex, Chain C"/>
    <property type="match status" value="1"/>
</dbReference>
<dbReference type="InterPro" id="IPR005797">
    <property type="entry name" value="Cyt_b/b6_N"/>
</dbReference>
<dbReference type="InterPro" id="IPR027387">
    <property type="entry name" value="Cytb/b6-like_sf"/>
</dbReference>
<dbReference type="InterPro" id="IPR016174">
    <property type="entry name" value="Di-haem_cyt_TM"/>
</dbReference>
<dbReference type="PANTHER" id="PTHR19271">
    <property type="entry name" value="CYTOCHROME B"/>
    <property type="match status" value="1"/>
</dbReference>
<dbReference type="PANTHER" id="PTHR19271:SF16">
    <property type="entry name" value="CYTOCHROME B"/>
    <property type="match status" value="1"/>
</dbReference>
<dbReference type="Pfam" id="PF00033">
    <property type="entry name" value="Cytochrome_B"/>
    <property type="match status" value="1"/>
</dbReference>
<dbReference type="SUPFAM" id="SSF81342">
    <property type="entry name" value="Transmembrane di-heme cytochromes"/>
    <property type="match status" value="1"/>
</dbReference>
<dbReference type="PROSITE" id="PS51002">
    <property type="entry name" value="CYTB_NTER"/>
    <property type="match status" value="1"/>
</dbReference>
<reference key="1">
    <citation type="journal article" date="1989" name="Proc. Natl. Acad. Sci. U.S.A.">
        <title>Dynamics of mitochondrial DNA evolution in animals: amplification and sequencing with conserved primers.</title>
        <authorList>
            <person name="Kocher T.D."/>
            <person name="Thomas W.K."/>
            <person name="Meyer A."/>
            <person name="Edwards S.V."/>
            <person name="Paeaebo S."/>
            <person name="Villablanca F.X."/>
            <person name="Wilson A.C."/>
        </authorList>
    </citation>
    <scope>NUCLEOTIDE SEQUENCE [GENOMIC DNA]</scope>
</reference>
<organism>
    <name type="scientific">Amphilophus labiatus</name>
    <name type="common">Red devil cichlid</name>
    <name type="synonym">Cichlasoma labiatum</name>
    <dbReference type="NCBI Taxonomy" id="61820"/>
    <lineage>
        <taxon>Eukaryota</taxon>
        <taxon>Metazoa</taxon>
        <taxon>Chordata</taxon>
        <taxon>Craniata</taxon>
        <taxon>Vertebrata</taxon>
        <taxon>Euteleostomi</taxon>
        <taxon>Actinopterygii</taxon>
        <taxon>Neopterygii</taxon>
        <taxon>Teleostei</taxon>
        <taxon>Neoteleostei</taxon>
        <taxon>Acanthomorphata</taxon>
        <taxon>Ovalentaria</taxon>
        <taxon>Cichlomorphae</taxon>
        <taxon>Cichliformes</taxon>
        <taxon>Cichlidae</taxon>
        <taxon>New World cichlids</taxon>
        <taxon>Cichlasomatinae</taxon>
        <taxon>Heroini</taxon>
        <taxon>Amphilophus</taxon>
    </lineage>
</organism>